<name>AVR6_CHICK</name>
<gene>
    <name type="primary">AVR6</name>
</gene>
<evidence type="ECO:0000250" key="1">
    <source>
        <dbReference type="UniProtKB" id="P56732"/>
    </source>
</evidence>
<evidence type="ECO:0000255" key="2"/>
<evidence type="ECO:0000255" key="3">
    <source>
        <dbReference type="PROSITE-ProRule" id="PRU00656"/>
    </source>
</evidence>
<evidence type="ECO:0000269" key="4">
    <source>
    </source>
</evidence>
<evidence type="ECO:0000305" key="5"/>
<reference key="1">
    <citation type="journal article" date="2000" name="Anim. Genet.">
        <title>Characterization and chromosomal localization of the chicken avidin gene family.</title>
        <authorList>
            <person name="Ahlroth M.K."/>
            <person name="Kola E.H."/>
            <person name="Ewald D."/>
            <person name="Masabanda J."/>
            <person name="Sazanov A."/>
            <person name="Fries R."/>
            <person name="Kulomaa M.S."/>
        </authorList>
    </citation>
    <scope>NUCLEOTIDE SEQUENCE [GENOMIC DNA]</scope>
    <source>
        <strain>Rhode Island</strain>
    </source>
</reference>
<reference key="2">
    <citation type="journal article" date="2002" name="Biochem. J.">
        <title>Chicken avidin-related proteins show altered biotin-binding and physico-chemical properties as compared with avidin.</title>
        <authorList>
            <person name="Laitinen O.H."/>
            <person name="Hytoenen V.P."/>
            <person name="Ahlroth M.K."/>
            <person name="Pentikaeinen O.T."/>
            <person name="Gallagher C."/>
            <person name="Nordlund H.R."/>
            <person name="Ovod V."/>
            <person name="Marttila A.T."/>
            <person name="Porkka E."/>
            <person name="Heino S."/>
            <person name="Johnson M.S."/>
            <person name="Airenne K.J."/>
            <person name="Kulomaa M.S."/>
        </authorList>
    </citation>
    <scope>FUNCTION</scope>
    <scope>SUBUNIT</scope>
    <scope>GLYCOSYLATION</scope>
</reference>
<feature type="signal peptide" evidence="2">
    <location>
        <begin position="1"/>
        <end position="24"/>
    </location>
</feature>
<feature type="chain" id="PRO_0000002727" description="Avidin-related protein 6">
    <location>
        <begin position="25"/>
        <end position="150"/>
    </location>
</feature>
<feature type="domain" description="Avidin-like" evidence="3">
    <location>
        <begin position="26"/>
        <end position="147"/>
    </location>
</feature>
<feature type="binding site" evidence="1">
    <location>
        <position position="36"/>
    </location>
    <ligand>
        <name>biotin</name>
        <dbReference type="ChEBI" id="CHEBI:57586"/>
    </ligand>
</feature>
<feature type="binding site" evidence="1">
    <location>
        <position position="40"/>
    </location>
    <ligand>
        <name>biotin</name>
        <dbReference type="ChEBI" id="CHEBI:57586"/>
    </ligand>
</feature>
<feature type="binding site" evidence="1">
    <location>
        <position position="57"/>
    </location>
    <ligand>
        <name>biotin</name>
        <dbReference type="ChEBI" id="CHEBI:57586"/>
    </ligand>
</feature>
<feature type="binding site" evidence="1">
    <location>
        <position position="59"/>
    </location>
    <ligand>
        <name>biotin</name>
        <dbReference type="ChEBI" id="CHEBI:57586"/>
    </ligand>
</feature>
<feature type="binding site" evidence="1">
    <location>
        <position position="63"/>
    </location>
    <ligand>
        <name>biotin</name>
        <dbReference type="ChEBI" id="CHEBI:57586"/>
    </ligand>
</feature>
<feature type="binding site" evidence="1">
    <location>
        <position position="95"/>
    </location>
    <ligand>
        <name>biotin</name>
        <dbReference type="ChEBI" id="CHEBI:57586"/>
    </ligand>
</feature>
<feature type="binding site" evidence="1">
    <location>
        <position position="99"/>
    </location>
    <ligand>
        <name>biotin</name>
        <dbReference type="ChEBI" id="CHEBI:57586"/>
    </ligand>
</feature>
<feature type="binding site" evidence="1">
    <location>
        <position position="140"/>
    </location>
    <ligand>
        <name>biotin</name>
        <dbReference type="ChEBI" id="CHEBI:57586"/>
    </ligand>
</feature>
<feature type="glycosylation site" description="N-linked (GlcNAc...) asparagine" evidence="2">
    <location>
        <position position="54"/>
    </location>
</feature>
<feature type="glycosylation site" description="N-linked (GlcNAc...) asparagine" evidence="2">
    <location>
        <position position="93"/>
    </location>
</feature>
<feature type="glycosylation site" description="N-linked (GlcNAc...) asparagine" evidence="2">
    <location>
        <position position="141"/>
    </location>
</feature>
<feature type="disulfide bond" evidence="1">
    <location>
        <begin position="28"/>
        <end position="105"/>
    </location>
</feature>
<keyword id="KW-0092">Biotin</keyword>
<keyword id="KW-1015">Disulfide bond</keyword>
<keyword id="KW-0325">Glycoprotein</keyword>
<keyword id="KW-1185">Reference proteome</keyword>
<keyword id="KW-0964">Secreted</keyword>
<keyword id="KW-0732">Signal</keyword>
<sequence length="150" mass="16528">MVHATSPLLLLLLLSLALVAPGLSARKCSLTGEWDNNLGSIMTIGAVNDNGEFNGTYITAVADNPGNIKLSPLLGIQHKRACQPTFGFTVHWNFSESTSVFVGQCFVDRSGKEVLKTKWLQRLAVDDISDDWKATRVGYNNFTRQRTVEE</sequence>
<organism>
    <name type="scientific">Gallus gallus</name>
    <name type="common">Chicken</name>
    <dbReference type="NCBI Taxonomy" id="9031"/>
    <lineage>
        <taxon>Eukaryota</taxon>
        <taxon>Metazoa</taxon>
        <taxon>Chordata</taxon>
        <taxon>Craniata</taxon>
        <taxon>Vertebrata</taxon>
        <taxon>Euteleostomi</taxon>
        <taxon>Archelosauria</taxon>
        <taxon>Archosauria</taxon>
        <taxon>Dinosauria</taxon>
        <taxon>Saurischia</taxon>
        <taxon>Theropoda</taxon>
        <taxon>Coelurosauria</taxon>
        <taxon>Aves</taxon>
        <taxon>Neognathae</taxon>
        <taxon>Galloanserae</taxon>
        <taxon>Galliformes</taxon>
        <taxon>Phasianidae</taxon>
        <taxon>Phasianinae</taxon>
        <taxon>Gallus</taxon>
    </lineage>
</organism>
<proteinExistence type="evidence at protein level"/>
<protein>
    <recommendedName>
        <fullName>Avidin-related protein 6</fullName>
    </recommendedName>
</protein>
<dbReference type="EMBL" id="AJ237658">
    <property type="protein sequence ID" value="CAB39893.1"/>
    <property type="molecule type" value="Genomic_DNA"/>
</dbReference>
<dbReference type="SMR" id="P56735"/>
<dbReference type="FunCoup" id="P56735">
    <property type="interactions" value="7"/>
</dbReference>
<dbReference type="GlyCosmos" id="P56735">
    <property type="glycosylation" value="3 sites, No reported glycans"/>
</dbReference>
<dbReference type="GlyGen" id="P56735">
    <property type="glycosylation" value="3 sites"/>
</dbReference>
<dbReference type="VEuPathDB" id="HostDB:LOC121108603"/>
<dbReference type="InParanoid" id="P56735"/>
<dbReference type="OMA" id="TRTGHNT"/>
<dbReference type="OrthoDB" id="2821340at2759"/>
<dbReference type="Proteomes" id="UP000000539">
    <property type="component" value="Unassembled WGS sequence"/>
</dbReference>
<dbReference type="GO" id="GO:0005576">
    <property type="term" value="C:extracellular region"/>
    <property type="evidence" value="ECO:0007669"/>
    <property type="project" value="UniProtKB-SubCell"/>
</dbReference>
<dbReference type="GO" id="GO:0009374">
    <property type="term" value="F:biotin binding"/>
    <property type="evidence" value="ECO:0000318"/>
    <property type="project" value="GO_Central"/>
</dbReference>
<dbReference type="FunFam" id="2.40.128.30:FF:000001">
    <property type="entry name" value="Avidin-related protein 2"/>
    <property type="match status" value="1"/>
</dbReference>
<dbReference type="Gene3D" id="2.40.128.30">
    <property type="entry name" value="Avidin-like"/>
    <property type="match status" value="1"/>
</dbReference>
<dbReference type="InterPro" id="IPR005469">
    <property type="entry name" value="Avidin"/>
</dbReference>
<dbReference type="InterPro" id="IPR017889">
    <property type="entry name" value="Avidin-like_CS"/>
</dbReference>
<dbReference type="InterPro" id="IPR036896">
    <property type="entry name" value="Avidin-like_sf"/>
</dbReference>
<dbReference type="InterPro" id="IPR005468">
    <property type="entry name" value="Avidin/str"/>
</dbReference>
<dbReference type="InterPro" id="IPR051764">
    <property type="entry name" value="Avidin/Streptavidin-rel"/>
</dbReference>
<dbReference type="PANTHER" id="PTHR34399:SF3">
    <property type="entry name" value="AVID PROTEIN-RELATED"/>
    <property type="match status" value="1"/>
</dbReference>
<dbReference type="PANTHER" id="PTHR34399">
    <property type="entry name" value="AVIDIN-RELATED"/>
    <property type="match status" value="1"/>
</dbReference>
<dbReference type="Pfam" id="PF01382">
    <property type="entry name" value="Avidin"/>
    <property type="match status" value="1"/>
</dbReference>
<dbReference type="PRINTS" id="PR00709">
    <property type="entry name" value="AVIDIN"/>
</dbReference>
<dbReference type="SUPFAM" id="SSF50876">
    <property type="entry name" value="Avidin/streptavidin"/>
    <property type="match status" value="1"/>
</dbReference>
<dbReference type="PROSITE" id="PS00577">
    <property type="entry name" value="AVIDIN_1"/>
    <property type="match status" value="1"/>
</dbReference>
<dbReference type="PROSITE" id="PS51326">
    <property type="entry name" value="AVIDIN_2"/>
    <property type="match status" value="1"/>
</dbReference>
<comment type="function">
    <text evidence="4">Forms a strong non-covalent specific complex with biotin.</text>
</comment>
<comment type="subunit">
    <text evidence="3 4">Homotetramer.</text>
</comment>
<comment type="subcellular location">
    <subcellularLocation>
        <location evidence="3">Secreted</location>
    </subcellularLocation>
</comment>
<comment type="PTM">
    <text evidence="4">Glycosylated.</text>
</comment>
<comment type="similarity">
    <text evidence="5">Belongs to the avidin/streptavidin family.</text>
</comment>
<accession>P56735</accession>